<dbReference type="EC" id="2.7.11.17"/>
<dbReference type="EMBL" id="L41816">
    <property type="protein sequence ID" value="AAA99458.1"/>
    <property type="molecule type" value="mRNA"/>
</dbReference>
<dbReference type="EMBL" id="BC106754">
    <property type="protein sequence ID" value="AAI06755.1"/>
    <property type="molecule type" value="mRNA"/>
</dbReference>
<dbReference type="EMBL" id="BC106755">
    <property type="protein sequence ID" value="AAI06756.1"/>
    <property type="molecule type" value="mRNA"/>
</dbReference>
<dbReference type="CCDS" id="CCDS2582.1"/>
<dbReference type="PIR" id="S57347">
    <property type="entry name" value="S57347"/>
</dbReference>
<dbReference type="RefSeq" id="NP_003647.1">
    <property type="nucleotide sequence ID" value="NM_003656.5"/>
</dbReference>
<dbReference type="PDB" id="4FG7">
    <property type="method" value="X-ray"/>
    <property type="resolution" value="2.70 A"/>
    <property type="chains" value="A=1-293"/>
</dbReference>
<dbReference type="PDB" id="4FG8">
    <property type="method" value="X-ray"/>
    <property type="resolution" value="2.20 A"/>
    <property type="chains" value="A/B=1-315"/>
</dbReference>
<dbReference type="PDB" id="4FG9">
    <property type="method" value="X-ray"/>
    <property type="resolution" value="2.40 A"/>
    <property type="chains" value="A/B=1-320"/>
</dbReference>
<dbReference type="PDB" id="4FGB">
    <property type="method" value="X-ray"/>
    <property type="resolution" value="2.60 A"/>
    <property type="chains" value="A=1-320"/>
</dbReference>
<dbReference type="PDBsum" id="4FG7"/>
<dbReference type="PDBsum" id="4FG8"/>
<dbReference type="PDBsum" id="4FG9"/>
<dbReference type="PDBsum" id="4FGB"/>
<dbReference type="BMRB" id="Q14012"/>
<dbReference type="SMR" id="Q14012"/>
<dbReference type="BioGRID" id="114106">
    <property type="interactions" value="89"/>
</dbReference>
<dbReference type="DIP" id="DIP-41906N"/>
<dbReference type="FunCoup" id="Q14012">
    <property type="interactions" value="1367"/>
</dbReference>
<dbReference type="IntAct" id="Q14012">
    <property type="interactions" value="72"/>
</dbReference>
<dbReference type="STRING" id="9606.ENSP00000256460"/>
<dbReference type="BindingDB" id="Q14012"/>
<dbReference type="ChEMBL" id="CHEMBL2493"/>
<dbReference type="DrugBank" id="DB12010">
    <property type="generic name" value="Fostamatinib"/>
</dbReference>
<dbReference type="DrugCentral" id="Q14012"/>
<dbReference type="GlyGen" id="Q14012">
    <property type="glycosylation" value="1 site, 1 N-linked glycan (1 site)"/>
</dbReference>
<dbReference type="iPTMnet" id="Q14012"/>
<dbReference type="PhosphoSitePlus" id="Q14012"/>
<dbReference type="BioMuta" id="CAMK1"/>
<dbReference type="DMDM" id="3122301"/>
<dbReference type="jPOST" id="Q14012"/>
<dbReference type="MassIVE" id="Q14012"/>
<dbReference type="PaxDb" id="9606-ENSP00000256460"/>
<dbReference type="PeptideAtlas" id="Q14012"/>
<dbReference type="ProteomicsDB" id="59795"/>
<dbReference type="Pumba" id="Q14012"/>
<dbReference type="TopDownProteomics" id="Q14012"/>
<dbReference type="Antibodypedia" id="10278">
    <property type="antibodies" value="343 antibodies from 33 providers"/>
</dbReference>
<dbReference type="DNASU" id="8536"/>
<dbReference type="Ensembl" id="ENST00000256460.8">
    <property type="protein sequence ID" value="ENSP00000256460.3"/>
    <property type="gene ID" value="ENSG00000134072.11"/>
</dbReference>
<dbReference type="GeneID" id="8536"/>
<dbReference type="KEGG" id="hsa:8536"/>
<dbReference type="MANE-Select" id="ENST00000256460.8">
    <property type="protein sequence ID" value="ENSP00000256460.3"/>
    <property type="RefSeq nucleotide sequence ID" value="NM_003656.5"/>
    <property type="RefSeq protein sequence ID" value="NP_003647.1"/>
</dbReference>
<dbReference type="UCSC" id="uc003bst.4">
    <property type="organism name" value="human"/>
</dbReference>
<dbReference type="AGR" id="HGNC:1459"/>
<dbReference type="CTD" id="8536"/>
<dbReference type="DisGeNET" id="8536"/>
<dbReference type="GeneCards" id="CAMK1"/>
<dbReference type="HGNC" id="HGNC:1459">
    <property type="gene designation" value="CAMK1"/>
</dbReference>
<dbReference type="HPA" id="ENSG00000134072">
    <property type="expression patterns" value="Tissue enhanced (adrenal)"/>
</dbReference>
<dbReference type="MIM" id="604998">
    <property type="type" value="gene"/>
</dbReference>
<dbReference type="neXtProt" id="NX_Q14012"/>
<dbReference type="OpenTargets" id="ENSG00000134072"/>
<dbReference type="PharmGKB" id="PA26048"/>
<dbReference type="VEuPathDB" id="HostDB:ENSG00000134072"/>
<dbReference type="eggNOG" id="KOG0032">
    <property type="taxonomic scope" value="Eukaryota"/>
</dbReference>
<dbReference type="GeneTree" id="ENSGT00940000156378"/>
<dbReference type="HOGENOM" id="CLU_000288_63_0_1"/>
<dbReference type="InParanoid" id="Q14012"/>
<dbReference type="OMA" id="HDWFESR"/>
<dbReference type="OrthoDB" id="40902at2759"/>
<dbReference type="PAN-GO" id="Q14012">
    <property type="GO annotations" value="4 GO annotations based on evolutionary models"/>
</dbReference>
<dbReference type="PhylomeDB" id="Q14012"/>
<dbReference type="TreeFam" id="TF314166"/>
<dbReference type="BRENDA" id="2.7.11.17">
    <property type="organism ID" value="2681"/>
</dbReference>
<dbReference type="PathwayCommons" id="Q14012"/>
<dbReference type="Reactome" id="R-HSA-9617324">
    <property type="pathway name" value="Negative regulation of NMDA receptor-mediated neuronal transmission"/>
</dbReference>
<dbReference type="Reactome" id="R-HSA-9619229">
    <property type="pathway name" value="Activation of RAC1 downstream of NMDARs"/>
</dbReference>
<dbReference type="SignaLink" id="Q14012"/>
<dbReference type="SIGNOR" id="Q14012"/>
<dbReference type="BioGRID-ORCS" id="8536">
    <property type="hits" value="13 hits in 1188 CRISPR screens"/>
</dbReference>
<dbReference type="ChiTaRS" id="CAMK1">
    <property type="organism name" value="human"/>
</dbReference>
<dbReference type="EvolutionaryTrace" id="Q14012"/>
<dbReference type="GeneWiki" id="CAMK1"/>
<dbReference type="GenomeRNAi" id="8536"/>
<dbReference type="Pharos" id="Q14012">
    <property type="development level" value="Tchem"/>
</dbReference>
<dbReference type="PRO" id="PR:Q14012"/>
<dbReference type="Proteomes" id="UP000005640">
    <property type="component" value="Chromosome 3"/>
</dbReference>
<dbReference type="RNAct" id="Q14012">
    <property type="molecule type" value="protein"/>
</dbReference>
<dbReference type="Bgee" id="ENSG00000134072">
    <property type="expression patterns" value="Expressed in right adrenal gland cortex and 131 other cell types or tissues"/>
</dbReference>
<dbReference type="ExpressionAtlas" id="Q14012">
    <property type="expression patterns" value="baseline and differential"/>
</dbReference>
<dbReference type="GO" id="GO:0005737">
    <property type="term" value="C:cytoplasm"/>
    <property type="evidence" value="ECO:0000318"/>
    <property type="project" value="GO_Central"/>
</dbReference>
<dbReference type="GO" id="GO:0005829">
    <property type="term" value="C:cytosol"/>
    <property type="evidence" value="ECO:0000304"/>
    <property type="project" value="Reactome"/>
</dbReference>
<dbReference type="GO" id="GO:0005634">
    <property type="term" value="C:nucleus"/>
    <property type="evidence" value="ECO:0007669"/>
    <property type="project" value="UniProtKB-SubCell"/>
</dbReference>
<dbReference type="GO" id="GO:0014069">
    <property type="term" value="C:postsynaptic density"/>
    <property type="evidence" value="ECO:0000318"/>
    <property type="project" value="GO_Central"/>
</dbReference>
<dbReference type="GO" id="GO:0005524">
    <property type="term" value="F:ATP binding"/>
    <property type="evidence" value="ECO:0007669"/>
    <property type="project" value="UniProtKB-KW"/>
</dbReference>
<dbReference type="GO" id="GO:0004683">
    <property type="term" value="F:calcium/calmodulin-dependent protein kinase activity"/>
    <property type="evidence" value="ECO:0000250"/>
    <property type="project" value="UniProtKB"/>
</dbReference>
<dbReference type="GO" id="GO:0005516">
    <property type="term" value="F:calmodulin binding"/>
    <property type="evidence" value="ECO:0000318"/>
    <property type="project" value="GO_Central"/>
</dbReference>
<dbReference type="GO" id="GO:0106310">
    <property type="term" value="F:protein serine kinase activity"/>
    <property type="evidence" value="ECO:0007669"/>
    <property type="project" value="RHEA"/>
</dbReference>
<dbReference type="GO" id="GO:0030154">
    <property type="term" value="P:cell differentiation"/>
    <property type="evidence" value="ECO:0007669"/>
    <property type="project" value="UniProtKB-KW"/>
</dbReference>
<dbReference type="GO" id="GO:0035556">
    <property type="term" value="P:intracellular signal transduction"/>
    <property type="evidence" value="ECO:0000315"/>
    <property type="project" value="UniProtKB"/>
</dbReference>
<dbReference type="GO" id="GO:0032091">
    <property type="term" value="P:negative regulation of protein binding"/>
    <property type="evidence" value="ECO:0000314"/>
    <property type="project" value="UniProtKB"/>
</dbReference>
<dbReference type="GO" id="GO:0007399">
    <property type="term" value="P:nervous system development"/>
    <property type="evidence" value="ECO:0007669"/>
    <property type="project" value="UniProtKB-KW"/>
</dbReference>
<dbReference type="GO" id="GO:0006913">
    <property type="term" value="P:nucleocytoplasmic transport"/>
    <property type="evidence" value="ECO:0007669"/>
    <property type="project" value="Ensembl"/>
</dbReference>
<dbReference type="GO" id="GO:0060999">
    <property type="term" value="P:positive regulation of dendritic spine development"/>
    <property type="evidence" value="ECO:0000315"/>
    <property type="project" value="UniProtKB"/>
</dbReference>
<dbReference type="GO" id="GO:0051149">
    <property type="term" value="P:positive regulation of muscle cell differentiation"/>
    <property type="evidence" value="ECO:0000315"/>
    <property type="project" value="BHF-UCL"/>
</dbReference>
<dbReference type="GO" id="GO:0010976">
    <property type="term" value="P:positive regulation of neuron projection development"/>
    <property type="evidence" value="ECO:0000314"/>
    <property type="project" value="UniProtKB"/>
</dbReference>
<dbReference type="GO" id="GO:0046827">
    <property type="term" value="P:positive regulation of protein export from nucleus"/>
    <property type="evidence" value="ECO:0000314"/>
    <property type="project" value="UniProtKB"/>
</dbReference>
<dbReference type="GO" id="GO:0071902">
    <property type="term" value="P:positive regulation of protein serine/threonine kinase activity"/>
    <property type="evidence" value="ECO:0000314"/>
    <property type="project" value="UniProtKB"/>
</dbReference>
<dbReference type="GO" id="GO:0051835">
    <property type="term" value="P:positive regulation of synapse structural plasticity"/>
    <property type="evidence" value="ECO:0000315"/>
    <property type="project" value="UniProtKB"/>
</dbReference>
<dbReference type="GO" id="GO:0060143">
    <property type="term" value="P:positive regulation of syncytium formation by plasma membrane fusion"/>
    <property type="evidence" value="ECO:0000315"/>
    <property type="project" value="UniProtKB"/>
</dbReference>
<dbReference type="GO" id="GO:0045944">
    <property type="term" value="P:positive regulation of transcription by RNA polymerase II"/>
    <property type="evidence" value="ECO:0000315"/>
    <property type="project" value="UniProtKB"/>
</dbReference>
<dbReference type="GO" id="GO:0006468">
    <property type="term" value="P:protein phosphorylation"/>
    <property type="evidence" value="ECO:0000314"/>
    <property type="project" value="UniProtKB"/>
</dbReference>
<dbReference type="GO" id="GO:0051147">
    <property type="term" value="P:regulation of muscle cell differentiation"/>
    <property type="evidence" value="ECO:0000314"/>
    <property type="project" value="UniProtKB"/>
</dbReference>
<dbReference type="GO" id="GO:0043393">
    <property type="term" value="P:regulation of protein binding"/>
    <property type="evidence" value="ECO:0000314"/>
    <property type="project" value="UniProtKB"/>
</dbReference>
<dbReference type="GO" id="GO:0032880">
    <property type="term" value="P:regulation of protein localization"/>
    <property type="evidence" value="ECO:0000314"/>
    <property type="project" value="UniProtKB"/>
</dbReference>
<dbReference type="GO" id="GO:0050807">
    <property type="term" value="P:regulation of synapse organization"/>
    <property type="evidence" value="ECO:0000318"/>
    <property type="project" value="GO_Central"/>
</dbReference>
<dbReference type="GO" id="GO:0007165">
    <property type="term" value="P:signal transduction"/>
    <property type="evidence" value="ECO:0000318"/>
    <property type="project" value="GO_Central"/>
</dbReference>
<dbReference type="CDD" id="cd14167">
    <property type="entry name" value="STKc_CaMKI_alpha"/>
    <property type="match status" value="1"/>
</dbReference>
<dbReference type="FunFam" id="1.10.510.10:FF:000026">
    <property type="entry name" value="Calcium/calmodulin-dependent protein kinase type 1"/>
    <property type="match status" value="1"/>
</dbReference>
<dbReference type="FunFam" id="3.30.200.20:FF:000203">
    <property type="entry name" value="Calcium/calmodulin-dependent protein kinase type 1"/>
    <property type="match status" value="1"/>
</dbReference>
<dbReference type="Gene3D" id="3.30.200.20">
    <property type="entry name" value="Phosphorylase Kinase, domain 1"/>
    <property type="match status" value="1"/>
</dbReference>
<dbReference type="Gene3D" id="1.10.510.10">
    <property type="entry name" value="Transferase(Phosphotransferase) domain 1"/>
    <property type="match status" value="1"/>
</dbReference>
<dbReference type="InterPro" id="IPR011009">
    <property type="entry name" value="Kinase-like_dom_sf"/>
</dbReference>
<dbReference type="InterPro" id="IPR000719">
    <property type="entry name" value="Prot_kinase_dom"/>
</dbReference>
<dbReference type="InterPro" id="IPR017441">
    <property type="entry name" value="Protein_kinase_ATP_BS"/>
</dbReference>
<dbReference type="InterPro" id="IPR008271">
    <property type="entry name" value="Ser/Thr_kinase_AS"/>
</dbReference>
<dbReference type="PANTHER" id="PTHR24347">
    <property type="entry name" value="SERINE/THREONINE-PROTEIN KINASE"/>
    <property type="match status" value="1"/>
</dbReference>
<dbReference type="Pfam" id="PF00069">
    <property type="entry name" value="Pkinase"/>
    <property type="match status" value="1"/>
</dbReference>
<dbReference type="SMART" id="SM00220">
    <property type="entry name" value="S_TKc"/>
    <property type="match status" value="1"/>
</dbReference>
<dbReference type="SUPFAM" id="SSF56112">
    <property type="entry name" value="Protein kinase-like (PK-like)"/>
    <property type="match status" value="1"/>
</dbReference>
<dbReference type="PROSITE" id="PS00107">
    <property type="entry name" value="PROTEIN_KINASE_ATP"/>
    <property type="match status" value="1"/>
</dbReference>
<dbReference type="PROSITE" id="PS50011">
    <property type="entry name" value="PROTEIN_KINASE_DOM"/>
    <property type="match status" value="1"/>
</dbReference>
<dbReference type="PROSITE" id="PS00108">
    <property type="entry name" value="PROTEIN_KINASE_ST"/>
    <property type="match status" value="1"/>
</dbReference>
<sequence length="370" mass="41337">MLGAVEGPRWKQAEDIRDIYDFRDVLGTGAFSEVILAEDKRTQKLVAIKCIAKEALEGKEGSMENEIAVLHKIKHPNIVALDDIYESGGHLYLIMQLVSGGELFDRIVEKGFYTERDASRLIFQVLDAVKYLHDLGIVHRDLKPENLLYYSLDEDSKIMISDFGLSKMEDPGSVLSTACGTPGYVAPEVLAQKPYSKAVDCWSIGVIAYILLCGYPPFYDENDAKLFEQILKAEYEFDSPYWDDISDSAKDFIRHLMEKDPEKRFTCEQALQHPWIAGDTALDKNIHQSVSEQIKKNFAKSKWKQAFNATAVVRHMRKLQLGTSQEGQGQTASHGELLTPVAGGPAAGCCCRDCCVEPGTELSPTLPHQL</sequence>
<keyword id="KW-0002">3D-structure</keyword>
<keyword id="KW-0021">Allosteric enzyme</keyword>
<keyword id="KW-0067">ATP-binding</keyword>
<keyword id="KW-0112">Calmodulin-binding</keyword>
<keyword id="KW-0131">Cell cycle</keyword>
<keyword id="KW-0963">Cytoplasm</keyword>
<keyword id="KW-0217">Developmental protein</keyword>
<keyword id="KW-0221">Differentiation</keyword>
<keyword id="KW-0903">Direct protein sequencing</keyword>
<keyword id="KW-1017">Isopeptide bond</keyword>
<keyword id="KW-0418">Kinase</keyword>
<keyword id="KW-0524">Neurogenesis</keyword>
<keyword id="KW-0547">Nucleotide-binding</keyword>
<keyword id="KW-0539">Nucleus</keyword>
<keyword id="KW-0597">Phosphoprotein</keyword>
<keyword id="KW-1267">Proteomics identification</keyword>
<keyword id="KW-1185">Reference proteome</keyword>
<keyword id="KW-0723">Serine/threonine-protein kinase</keyword>
<keyword id="KW-0808">Transferase</keyword>
<keyword id="KW-0832">Ubl conjugation</keyword>
<protein>
    <recommendedName>
        <fullName>Calcium/calmodulin-dependent protein kinase type 1</fullName>
        <ecNumber>2.7.11.17</ecNumber>
    </recommendedName>
    <alternativeName>
        <fullName>CaM kinase I</fullName>
        <shortName>CaM-KI</shortName>
    </alternativeName>
    <alternativeName>
        <fullName>CaM kinase I alpha</fullName>
        <shortName>CaMKI-alpha</shortName>
    </alternativeName>
</protein>
<comment type="function">
    <text evidence="1 4 6 7 8 9 11 12 13">Calcium/calmodulin-dependent protein kinase that operates in the calcium-triggered CaMKK-CaMK1 signaling cascade and, upon calcium influx, regulates transcription activators activity, cell cycle, hormone production, cell differentiation, actin filament organization and neurite outgrowth. Recognizes the substrate consensus sequence [MVLIF]-x-R-x(2)-[ST]-x(3)-[MVLIF]. Regulates axonal extension and growth cone motility in hippocampal and cerebellar nerve cells. Upon NMDA receptor-mediated Ca(2+) elevation, promotes dendritic growth in hippocampal neurons and is essential in synapses for full long-term potentiation (LTP) and ERK2-dependent translational activation. Downstream of NMDA receptors, promotes the formation of spines and synapses in hippocampal neurons by phosphorylating ARHGEF7/BETAPIX on 'Ser-694', which results in the enhancement of ARHGEF7 activity and activation of RAC1. Promotes neuronal differentiation and neurite outgrowth by activation and phosphorylation of MARK2 on 'Ser-91', 'Ser-92', 'Ser-93' and 'Ser-294'. Promotes nuclear export of HDAC5 and binding to 14-3-3 by phosphorylation of 'Ser-259' and 'Ser-498' in the regulation of muscle cell differentiation. Regulates NUMB-mediated endocytosis by phosphorylation of NUMB on 'Ser-276' and 'Ser-295'. Involved in the regulation of basal and estrogen-stimulated migration of medulloblastoma cells through ARHGEF7/BETAPIX phosphorylation (By similarity). Is required for proper activation of cyclin-D1/CDK4 complex during G1 progression in diploid fibroblasts. Plays a role in K(+) and ANG2-mediated regulation of the aldosterone synthase (CYP11B2) to produce aldosterone in the adrenal cortex. Phosphorylates EIF4G3/eIF4GII. In vitro phosphorylates CREB1, ATF1, CFTR, MYL9 and SYN1/synapsin I.</text>
</comment>
<comment type="catalytic activity">
    <reaction>
        <text>L-seryl-[protein] + ATP = O-phospho-L-seryl-[protein] + ADP + H(+)</text>
        <dbReference type="Rhea" id="RHEA:17989"/>
        <dbReference type="Rhea" id="RHEA-COMP:9863"/>
        <dbReference type="Rhea" id="RHEA-COMP:11604"/>
        <dbReference type="ChEBI" id="CHEBI:15378"/>
        <dbReference type="ChEBI" id="CHEBI:29999"/>
        <dbReference type="ChEBI" id="CHEBI:30616"/>
        <dbReference type="ChEBI" id="CHEBI:83421"/>
        <dbReference type="ChEBI" id="CHEBI:456216"/>
        <dbReference type="EC" id="2.7.11.17"/>
    </reaction>
</comment>
<comment type="catalytic activity">
    <reaction>
        <text>L-threonyl-[protein] + ATP = O-phospho-L-threonyl-[protein] + ADP + H(+)</text>
        <dbReference type="Rhea" id="RHEA:46608"/>
        <dbReference type="Rhea" id="RHEA-COMP:11060"/>
        <dbReference type="Rhea" id="RHEA-COMP:11605"/>
        <dbReference type="ChEBI" id="CHEBI:15378"/>
        <dbReference type="ChEBI" id="CHEBI:30013"/>
        <dbReference type="ChEBI" id="CHEBI:30616"/>
        <dbReference type="ChEBI" id="CHEBI:61977"/>
        <dbReference type="ChEBI" id="CHEBI:456216"/>
        <dbReference type="EC" id="2.7.11.17"/>
    </reaction>
</comment>
<comment type="activity regulation">
    <text evidence="14 16">Activated by Ca(2+)/calmodulin. Binding of calmodulin results in conformational change that relieves intrasteric autoinhibition and allows phosphorylation of Thr-177 within the activation loop by CaMKK1 or CaMKK2. Phosphorylation of Thr-177 results in several fold increase in total activity. Unlike CaMK4, is unable to exhibit autonomous activity after Ca(2+)/calmodulin activation.</text>
</comment>
<comment type="subunit">
    <text evidence="1 11 12">Monomer. Interacts with XPO1 (By similarity). Interacts with MARK2, ARHGEF7/BETAPIX and GIT1.</text>
</comment>
<comment type="interaction">
    <interactant intactId="EBI-6380130">
        <id>Q14012</id>
    </interactant>
    <interactant intactId="EBI-930964">
        <id>P54253</id>
        <label>ATXN1</label>
    </interactant>
    <organismsDiffer>false</organismsDiffer>
    <experiments>12</experiments>
</comment>
<comment type="interaction">
    <interactant intactId="EBI-6380130">
        <id>Q14012</id>
    </interactant>
    <interactant intactId="EBI-397435">
        <id>P62158</id>
        <label>CALM3</label>
    </interactant>
    <organismsDiffer>false</organismsDiffer>
    <experiments>2</experiments>
</comment>
<comment type="interaction">
    <interactant intactId="EBI-6380130">
        <id>Q14012</id>
    </interactant>
    <interactant intactId="EBI-3911453">
        <id>Q8IU85</id>
        <label>CAMK1D</label>
    </interactant>
    <organismsDiffer>false</organismsDiffer>
    <experiments>3</experiments>
</comment>
<comment type="interaction">
    <interactant intactId="EBI-6380130">
        <id>Q14012</id>
    </interactant>
    <interactant intactId="EBI-466029">
        <id>P42858</id>
        <label>HTT</label>
    </interactant>
    <organismsDiffer>false</organismsDiffer>
    <experiments>3</experiments>
</comment>
<comment type="interaction">
    <interactant intactId="EBI-6380130">
        <id>Q14012</id>
    </interactant>
    <interactant intactId="EBI-17178971">
        <id>Q14005-2</id>
        <label>IL16</label>
    </interactant>
    <organismsDiffer>false</organismsDiffer>
    <experiments>3</experiments>
</comment>
<comment type="subcellular location">
    <subcellularLocation>
        <location evidence="1">Cytoplasm</location>
    </subcellularLocation>
    <subcellularLocation>
        <location evidence="1">Nucleus</location>
    </subcellularLocation>
    <text evidence="1">Predominantly cytoplasmic.</text>
</comment>
<comment type="tissue specificity">
    <text evidence="6 9">Widely expressed. Expressed in cells of the zona glomerulosa of the adrenal cortex.</text>
</comment>
<comment type="domain">
    <text evidence="14">The autoinhibitory domain overlaps with the calmodulin binding region and interacts in the inactive folded state with the catalytic domain as a pseudosubstrate.</text>
</comment>
<comment type="PTM">
    <text evidence="5 16 17">Phosphorylated by CaMKK1 and CaMKK2 on Thr-177.</text>
</comment>
<comment type="PTM">
    <text evidence="15">Polybiquitinated by the E3 ubiquitin-protein ligase complex SCF(FBXL12), leading to proteasomal degradation.</text>
</comment>
<comment type="similarity">
    <text evidence="18">Belongs to the protein kinase superfamily. CAMK Ser/Thr protein kinase family. CaMK subfamily.</text>
</comment>
<evidence type="ECO:0000250" key="1"/>
<evidence type="ECO:0000255" key="2">
    <source>
        <dbReference type="PROSITE-ProRule" id="PRU00159"/>
    </source>
</evidence>
<evidence type="ECO:0000255" key="3">
    <source>
        <dbReference type="PROSITE-ProRule" id="PRU10027"/>
    </source>
</evidence>
<evidence type="ECO:0000269" key="4">
    <source>
    </source>
</evidence>
<evidence type="ECO:0000269" key="5">
    <source>
    </source>
</evidence>
<evidence type="ECO:0000269" key="6">
    <source>
    </source>
</evidence>
<evidence type="ECO:0000269" key="7">
    <source>
    </source>
</evidence>
<evidence type="ECO:0000269" key="8">
    <source>
    </source>
</evidence>
<evidence type="ECO:0000269" key="9">
    <source>
    </source>
</evidence>
<evidence type="ECO:0000269" key="10">
    <source>
    </source>
</evidence>
<evidence type="ECO:0000269" key="11">
    <source>
    </source>
</evidence>
<evidence type="ECO:0000269" key="12">
    <source>
    </source>
</evidence>
<evidence type="ECO:0000269" key="13">
    <source>
    </source>
</evidence>
<evidence type="ECO:0000269" key="14">
    <source>
    </source>
</evidence>
<evidence type="ECO:0000269" key="15">
    <source>
    </source>
</evidence>
<evidence type="ECO:0000269" key="16">
    <source>
    </source>
</evidence>
<evidence type="ECO:0000269" key="17">
    <source>
    </source>
</evidence>
<evidence type="ECO:0000305" key="18"/>
<evidence type="ECO:0000305" key="19">
    <source>
    </source>
</evidence>
<evidence type="ECO:0007744" key="20">
    <source>
    </source>
</evidence>
<evidence type="ECO:0007829" key="21">
    <source>
        <dbReference type="PDB" id="4FG8"/>
    </source>
</evidence>
<evidence type="ECO:0007829" key="22">
    <source>
        <dbReference type="PDB" id="4FG9"/>
    </source>
</evidence>
<evidence type="ECO:0007829" key="23">
    <source>
        <dbReference type="PDB" id="4FGB"/>
    </source>
</evidence>
<name>KCC1A_HUMAN</name>
<organism>
    <name type="scientific">Homo sapiens</name>
    <name type="common">Human</name>
    <dbReference type="NCBI Taxonomy" id="9606"/>
    <lineage>
        <taxon>Eukaryota</taxon>
        <taxon>Metazoa</taxon>
        <taxon>Chordata</taxon>
        <taxon>Craniata</taxon>
        <taxon>Vertebrata</taxon>
        <taxon>Euteleostomi</taxon>
        <taxon>Mammalia</taxon>
        <taxon>Eutheria</taxon>
        <taxon>Euarchontoglires</taxon>
        <taxon>Primates</taxon>
        <taxon>Haplorrhini</taxon>
        <taxon>Catarrhini</taxon>
        <taxon>Hominidae</taxon>
        <taxon>Homo</taxon>
    </lineage>
</organism>
<reference key="1">
    <citation type="journal article" date="1995" name="EMBO J.">
        <title>Human calcium-calmodulin dependent protein kinase I: cDNA cloning, domain structure and activation by phosphorylation at threonine-177 by calcium-calmodulin dependent protein kinase I kinase.</title>
        <authorList>
            <person name="Haribabu B."/>
            <person name="Hook S.S."/>
            <person name="Selbert M.A."/>
            <person name="Goldstein E.G."/>
            <person name="Tomhave E.D."/>
            <person name="Edelman A.M."/>
            <person name="Snyderman R."/>
            <person name="Means A.R."/>
        </authorList>
    </citation>
    <scope>NUCLEOTIDE SEQUENCE [MRNA]</scope>
    <scope>PHOSPHORYLATION AT THR-177</scope>
    <scope>MUTAGENESIS OF LYS-49 AND THR-177</scope>
    <scope>ACTIVITY REGULATION</scope>
</reference>
<reference key="2">
    <citation type="journal article" date="2004" name="Genome Res.">
        <title>The status, quality, and expansion of the NIH full-length cDNA project: the Mammalian Gene Collection (MGC).</title>
        <authorList>
            <consortium name="The MGC Project Team"/>
        </authorList>
    </citation>
    <scope>NUCLEOTIDE SEQUENCE [LARGE SCALE MRNA]</scope>
</reference>
<reference key="3">
    <citation type="journal article" date="2003" name="Nat. Biotechnol.">
        <title>Exploring proteomes and analyzing protein processing by mass spectrometric identification of sorted N-terminal peptides.</title>
        <authorList>
            <person name="Gevaert K."/>
            <person name="Goethals M."/>
            <person name="Martens L."/>
            <person name="Van Damme J."/>
            <person name="Staes A."/>
            <person name="Thomas G.R."/>
            <person name="Vandekerckhove J."/>
        </authorList>
    </citation>
    <scope>PROTEIN SEQUENCE OF 1-9</scope>
    <source>
        <tissue>Platelet</tissue>
    </source>
</reference>
<reference key="4">
    <citation type="journal article" date="1998" name="J. Biomed. Sci.">
        <title>Cloning, expression and chromosomal localization of human Ca2+/calmodulin-dependent protein kinase kinase.</title>
        <authorList>
            <person name="Hsu L.-S."/>
            <person name="Tsou A.-P."/>
            <person name="Chi C.-W."/>
            <person name="Lee C.-H."/>
            <person name="Chen J.-Y."/>
        </authorList>
    </citation>
    <scope>PHOSPHORYLATION BY CAMKK1</scope>
</reference>
<reference key="5">
    <citation type="journal article" date="2000" name="Proc. Natl. Acad. Sci. U.S.A.">
        <title>Activation of the myocyte enhancer factor-2 transcription factor by calcium/calmodulin-dependent protein kinase-stimulated binding of 14-3-3 to histone deacetylase 5.</title>
        <authorList>
            <person name="McKinsey T.A."/>
            <person name="Zhang C.-L."/>
            <person name="Olson E.N."/>
        </authorList>
    </citation>
    <scope>FUNCTION IN PHOSPHORYLATION OF HDAC5</scope>
</reference>
<reference key="6">
    <citation type="journal article" date="2001" name="J. Biol. Chem.">
        <title>Human Ca2+/calmodulin-dependent protein kinase kinase beta gene encodes multiple isoforms that display distinct kinase activity.</title>
        <authorList>
            <person name="Hsu L.-S."/>
            <person name="Chen G.-D."/>
            <person name="Lee L.-S."/>
            <person name="Chi C.-W."/>
            <person name="Cheng J.-F."/>
            <person name="Chen J.-Y."/>
        </authorList>
    </citation>
    <scope>PHOSPHORYLATION BY CAMKK2</scope>
</reference>
<reference key="7">
    <citation type="journal article" date="2002" name="Endocrinology">
        <title>Calmodulin-dependent kinase I regulates adrenal cell expression of aldosterone synthase.</title>
        <authorList>
            <person name="Condon J.C."/>
            <person name="Pezzi V."/>
            <person name="Drummond B.M."/>
            <person name="Yin S."/>
            <person name="Rainey W.E."/>
        </authorList>
    </citation>
    <scope>FUNCTION</scope>
    <scope>TISSUE SPECIFICITY</scope>
</reference>
<reference key="8">
    <citation type="journal article" date="2003" name="J. Biol. Chem.">
        <title>Phosphorylation screening identifies translational initiation factor 4GII as an intracellular target of Ca(2+)/calmodulin-dependent protein kinase I.</title>
        <authorList>
            <person name="Qin H."/>
            <person name="Raught B."/>
            <person name="Sonenberg N."/>
            <person name="Goldstein E.G."/>
            <person name="Edelman A.M."/>
        </authorList>
    </citation>
    <scope>FUNCTION IN PHOSPHORYLATION OF EIF4G3</scope>
</reference>
<reference key="9">
    <citation type="journal article" date="2004" name="J. Biol. Chem.">
        <title>Regulation of cyclin D1/Cdk4 complexes by calcium/calmodulin-dependent protein kinase I.</title>
        <authorList>
            <person name="Kahl C.R."/>
            <person name="Means A.R."/>
        </authorList>
    </citation>
    <scope>FUNCTION IN CYCLIN-D1/CDK4 COMPLEX</scope>
    <scope>MUTAGENESIS OF LYS-49</scope>
</reference>
<reference key="10">
    <citation type="journal article" date="2007" name="J. Neurosci.">
        <title>A calcium- and calmodulin-dependent kinase Ialpha/microtubule affinity regulating kinase 2 signaling cascade mediates calcium-dependent neurite outgrowth.</title>
        <authorList>
            <person name="Uboha N.V."/>
            <person name="Flajolet M."/>
            <person name="Nairn A.C."/>
            <person name="Picciotto M.R."/>
        </authorList>
    </citation>
    <scope>FUNCTION</scope>
    <scope>INTERACTION WITH MARK2</scope>
</reference>
<reference key="11">
    <citation type="journal article" date="2007" name="Neurosci. Res.">
        <title>Spatiotemporal expression of four isoforms of Ca2+/calmodulin-dependent protein kinase I in brain and its possible roles in hippocampal dendritic growth.</title>
        <authorList>
            <person name="Kamata A."/>
            <person name="Sakagami H."/>
            <person name="Tokumitsu H."/>
            <person name="Owada Y."/>
            <person name="Fukunaga K."/>
            <person name="Kondo H."/>
        </authorList>
    </citation>
    <scope>FUNCTION IN HIPPOCAMPAL DENDRITITE GROWTH</scope>
    <scope>TISSUE SPECIFICITY</scope>
</reference>
<reference key="12">
    <citation type="journal article" date="2008" name="Neuron">
        <title>Activity-dependent synaptogenesis: regulation by a CaM-kinase kinase/CaM-kinase I/betaPIX signaling complex.</title>
        <authorList>
            <person name="Saneyoshi T."/>
            <person name="Wayman G."/>
            <person name="Fortin D."/>
            <person name="Davare M."/>
            <person name="Hoshi N."/>
            <person name="Nozaki N."/>
            <person name="Natsume T."/>
            <person name="Soderling T.R."/>
        </authorList>
    </citation>
    <scope>FUNCTION IN PHOSPHORYLATION OF ARHGEF7/BETAPIX</scope>
    <scope>INTERACTION WITH ARHGEF7/BETAPIX AND GIT1</scope>
</reference>
<reference key="13">
    <citation type="journal article" date="2010" name="J. Neurosci.">
        <title>CaMKK-CaMKI signaling pathways differentially control axon and dendrite elongation in cortical neurons.</title>
        <authorList>
            <person name="Neal A.P."/>
            <person name="Molina-Campos E."/>
            <person name="Marrero-Rosado B."/>
            <person name="Bradford A.B."/>
            <person name="Fox S.M."/>
            <person name="Kovalova N."/>
            <person name="Hannon H.E."/>
        </authorList>
    </citation>
    <scope>FUNCTION IN AXON ELONGATION</scope>
</reference>
<reference key="14">
    <citation type="journal article" date="2001" name="Chem. Rev.">
        <title>Structure and regulation of calcium/calmodulin-dependent protein kinases.</title>
        <authorList>
            <person name="Soderling T.R."/>
            <person name="Stull J.T."/>
        </authorList>
    </citation>
    <scope>REVIEW</scope>
</reference>
<reference key="15">
    <citation type="journal article" date="2008" name="Neuron">
        <title>Calmodulin-kinases: modulators of neuronal development and plasticity.</title>
        <authorList>
            <person name="Wayman G.A."/>
            <person name="Lee Y.S."/>
            <person name="Tokumitsu H."/>
            <person name="Silva A.J."/>
            <person name="Silva A."/>
            <person name="Soderling T.R."/>
        </authorList>
    </citation>
    <scope>REVIEW ON FUNCTION IN NEURONAL PLASTICITY</scope>
</reference>
<reference key="16">
    <citation type="journal article" date="2011" name="BMC Syst. Biol.">
        <title>Initial characterization of the human central proteome.</title>
        <authorList>
            <person name="Burkard T.R."/>
            <person name="Planyavsky M."/>
            <person name="Kaupe I."/>
            <person name="Breitwieser F.P."/>
            <person name="Buerckstuemmer T."/>
            <person name="Bennett K.L."/>
            <person name="Superti-Furga G."/>
            <person name="Colinge J."/>
        </authorList>
    </citation>
    <scope>IDENTIFICATION BY MASS SPECTROMETRY [LARGE SCALE ANALYSIS]</scope>
</reference>
<reference key="17">
    <citation type="journal article" date="2011" name="Cell Cycle">
        <title>Controlling the cell cycle: the role of calcium/calmodulin-stimulated protein kinases I and II.</title>
        <authorList>
            <person name="Skelding K.A."/>
            <person name="Rostas J.A."/>
            <person name="Verrills N.M."/>
        </authorList>
    </citation>
    <scope>REVIEW ON INVOLVEMENT IN CELL CYCLE</scope>
</reference>
<reference key="18">
    <citation type="journal article" date="2012" name="Proc. Natl. Acad. Sci. U.S.A.">
        <title>N-terminal acetylome analyses and functional insights of the N-terminal acetyltransferase NatB.</title>
        <authorList>
            <person name="Van Damme P."/>
            <person name="Lasa M."/>
            <person name="Polevoda B."/>
            <person name="Gazquez C."/>
            <person name="Elosegui-Artola A."/>
            <person name="Kim D.S."/>
            <person name="De Juan-Pardo E."/>
            <person name="Demeyer K."/>
            <person name="Hole K."/>
            <person name="Larrea E."/>
            <person name="Timmerman E."/>
            <person name="Prieto J."/>
            <person name="Arnesen T."/>
            <person name="Sherman F."/>
            <person name="Gevaert K."/>
            <person name="Aldabe R."/>
        </authorList>
    </citation>
    <scope>IDENTIFICATION BY MASS SPECTROMETRY [LARGE SCALE ANALYSIS]</scope>
</reference>
<reference key="19">
    <citation type="journal article" date="2013" name="Cell. Signal.">
        <title>Fbxl12 triggers G1 arrest by mediating degradation of calmodulin kinase I.</title>
        <authorList>
            <person name="Mallampalli R.K."/>
            <person name="Kaercher L."/>
            <person name="Snavely C."/>
            <person name="Pulijala R."/>
            <person name="Chen B.B."/>
            <person name="Coon T."/>
            <person name="Zhao J."/>
            <person name="Agassandian M."/>
        </authorList>
    </citation>
    <scope>UBIQUITINATION AT LYS-59</scope>
</reference>
<reference key="20">
    <citation type="journal article" date="2014" name="J. Proteomics">
        <title>An enzyme assisted RP-RPLC approach for in-depth analysis of human liver phosphoproteome.</title>
        <authorList>
            <person name="Bian Y."/>
            <person name="Song C."/>
            <person name="Cheng K."/>
            <person name="Dong M."/>
            <person name="Wang F."/>
            <person name="Huang J."/>
            <person name="Sun D."/>
            <person name="Wang L."/>
            <person name="Ye M."/>
            <person name="Zou H."/>
        </authorList>
    </citation>
    <scope>PHOSPHORYLATION [LARGE SCALE ANALYSIS] AT SER-363</scope>
    <scope>IDENTIFICATION BY MASS SPECTROMETRY [LARGE SCALE ANALYSIS]</scope>
    <source>
        <tissue>Liver</tissue>
    </source>
</reference>
<reference key="21">
    <citation type="journal article" date="2012" name="PLoS ONE">
        <title>Crystal structures of human CaMKIalpha reveal insights into the regulation mechanism of CaMKI.</title>
        <authorList>
            <person name="Zha M."/>
            <person name="Zhong C."/>
            <person name="Ou Y."/>
            <person name="Han L."/>
            <person name="Wang J."/>
            <person name="Ding J."/>
        </authorList>
    </citation>
    <scope>X-RAY CRYSTALLOGRAPHY (2.2 ANGSTROMS) OF 1-315 IN COMPLEXES WITH ATP</scope>
    <scope>DOMAIN</scope>
    <scope>ACTIVITY REGULATION</scope>
</reference>
<reference key="22">
    <citation type="journal article" date="2007" name="Nature">
        <title>Patterns of somatic mutation in human cancer genomes.</title>
        <authorList>
            <person name="Greenman C."/>
            <person name="Stephens P."/>
            <person name="Smith R."/>
            <person name="Dalgliesh G.L."/>
            <person name="Hunter C."/>
            <person name="Bignell G."/>
            <person name="Davies H."/>
            <person name="Teague J."/>
            <person name="Butler A."/>
            <person name="Stevens C."/>
            <person name="Edkins S."/>
            <person name="O'Meara S."/>
            <person name="Vastrik I."/>
            <person name="Schmidt E.E."/>
            <person name="Avis T."/>
            <person name="Barthorpe S."/>
            <person name="Bhamra G."/>
            <person name="Buck G."/>
            <person name="Choudhury B."/>
            <person name="Clements J."/>
            <person name="Cole J."/>
            <person name="Dicks E."/>
            <person name="Forbes S."/>
            <person name="Gray K."/>
            <person name="Halliday K."/>
            <person name="Harrison R."/>
            <person name="Hills K."/>
            <person name="Hinton J."/>
            <person name="Jenkinson A."/>
            <person name="Jones D."/>
            <person name="Menzies A."/>
            <person name="Mironenko T."/>
            <person name="Perry J."/>
            <person name="Raine K."/>
            <person name="Richardson D."/>
            <person name="Shepherd R."/>
            <person name="Small A."/>
            <person name="Tofts C."/>
            <person name="Varian J."/>
            <person name="Webb T."/>
            <person name="West S."/>
            <person name="Widaa S."/>
            <person name="Yates A."/>
            <person name="Cahill D.P."/>
            <person name="Louis D.N."/>
            <person name="Goldstraw P."/>
            <person name="Nicholson A.G."/>
            <person name="Brasseur F."/>
            <person name="Looijenga L."/>
            <person name="Weber B.L."/>
            <person name="Chiew Y.-E."/>
            <person name="DeFazio A."/>
            <person name="Greaves M.F."/>
            <person name="Green A.R."/>
            <person name="Campbell P."/>
            <person name="Birney E."/>
            <person name="Easton D.F."/>
            <person name="Chenevix-Trench G."/>
            <person name="Tan M.-H."/>
            <person name="Khoo S.K."/>
            <person name="Teh B.T."/>
            <person name="Yuen S.T."/>
            <person name="Leung S.Y."/>
            <person name="Wooster R."/>
            <person name="Futreal P.A."/>
            <person name="Stratton M.R."/>
        </authorList>
    </citation>
    <scope>VARIANTS [LARGE SCALE ANALYSIS] SER-217 AND LYS-361</scope>
</reference>
<gene>
    <name type="primary">CAMK1</name>
</gene>
<accession>Q14012</accession>
<accession>Q3KPF6</accession>
<proteinExistence type="evidence at protein level"/>
<feature type="chain" id="PRO_0000086076" description="Calcium/calmodulin-dependent protein kinase type 1">
    <location>
        <begin position="1"/>
        <end position="370"/>
    </location>
</feature>
<feature type="domain" description="Protein kinase" evidence="2">
    <location>
        <begin position="20"/>
        <end position="276"/>
    </location>
</feature>
<feature type="region of interest" description="Autoinhibitory domain">
    <location>
        <begin position="276"/>
        <end position="316"/>
    </location>
</feature>
<feature type="region of interest" description="Calmodulin-binding" evidence="1">
    <location>
        <begin position="296"/>
        <end position="317"/>
    </location>
</feature>
<feature type="short sequence motif" description="Nuclear export signal" evidence="1">
    <location>
        <begin position="315"/>
        <end position="321"/>
    </location>
</feature>
<feature type="active site" description="Proton acceptor" evidence="2 3">
    <location>
        <position position="141"/>
    </location>
</feature>
<feature type="binding site">
    <location>
        <begin position="26"/>
        <end position="34"/>
    </location>
    <ligand>
        <name>ATP</name>
        <dbReference type="ChEBI" id="CHEBI:30616"/>
    </ligand>
</feature>
<feature type="binding site">
    <location>
        <position position="49"/>
    </location>
    <ligand>
        <name>ATP</name>
        <dbReference type="ChEBI" id="CHEBI:30616"/>
    </ligand>
</feature>
<feature type="modified residue" description="Phosphothreonine; by CaMKK1 and CaMKK2" evidence="16">
    <location>
        <position position="177"/>
    </location>
</feature>
<feature type="modified residue" description="Phosphoserine" evidence="20">
    <location>
        <position position="363"/>
    </location>
</feature>
<feature type="cross-link" description="Glycyl lysine isopeptide (Lys-Gly) (interchain with G-Cter in ubiquitin)" evidence="19">
    <location>
        <position position="59"/>
    </location>
</feature>
<feature type="sequence variant" id="VAR_040596" description="In a metastatic melanoma sample; somatic mutation; dbSNP:rs907102077." evidence="10">
    <original>P</original>
    <variation>S</variation>
    <location>
        <position position="217"/>
    </location>
</feature>
<feature type="sequence variant" id="VAR_040597" description="In dbSNP:rs56033923." evidence="10">
    <original>E</original>
    <variation>K</variation>
    <location>
        <position position="361"/>
    </location>
</feature>
<feature type="mutagenesis site" description="Catalytically inactive form; prevents CDK4 activation." evidence="8 16">
    <original>K</original>
    <variation>A</variation>
    <location>
        <position position="49"/>
    </location>
</feature>
<feature type="mutagenesis site" description="Loss of activation by CaMKK1." evidence="16">
    <original>T</original>
    <variation>A</variation>
    <location>
        <position position="177"/>
    </location>
</feature>
<feature type="mutagenesis site" description="Partial activation in absence of CaMKK1." evidence="16">
    <original>T</original>
    <variation>D</variation>
    <location>
        <position position="177"/>
    </location>
</feature>
<feature type="helix" evidence="21">
    <location>
        <begin position="16"/>
        <end position="18"/>
    </location>
</feature>
<feature type="strand" evidence="21">
    <location>
        <begin position="20"/>
        <end position="29"/>
    </location>
</feature>
<feature type="strand" evidence="21">
    <location>
        <begin position="32"/>
        <end position="39"/>
    </location>
</feature>
<feature type="turn" evidence="21">
    <location>
        <begin position="40"/>
        <end position="42"/>
    </location>
</feature>
<feature type="strand" evidence="21">
    <location>
        <begin position="45"/>
        <end position="52"/>
    </location>
</feature>
<feature type="helix" evidence="21">
    <location>
        <begin position="66"/>
        <end position="70"/>
    </location>
</feature>
<feature type="strand" evidence="21">
    <location>
        <begin position="81"/>
        <end position="86"/>
    </location>
</feature>
<feature type="strand" evidence="21">
    <location>
        <begin position="88"/>
        <end position="95"/>
    </location>
</feature>
<feature type="strand" evidence="22">
    <location>
        <begin position="100"/>
        <end position="102"/>
    </location>
</feature>
<feature type="helix" evidence="21">
    <location>
        <begin position="103"/>
        <end position="109"/>
    </location>
</feature>
<feature type="helix" evidence="21">
    <location>
        <begin position="115"/>
        <end position="134"/>
    </location>
</feature>
<feature type="helix" evidence="21">
    <location>
        <begin position="144"/>
        <end position="146"/>
    </location>
</feature>
<feature type="strand" evidence="21">
    <location>
        <begin position="147"/>
        <end position="152"/>
    </location>
</feature>
<feature type="strand" evidence="21">
    <location>
        <begin position="158"/>
        <end position="160"/>
    </location>
</feature>
<feature type="helix" evidence="23">
    <location>
        <begin position="166"/>
        <end position="168"/>
    </location>
</feature>
<feature type="helix" evidence="21">
    <location>
        <begin position="173"/>
        <end position="178"/>
    </location>
</feature>
<feature type="turn" evidence="21">
    <location>
        <begin position="182"/>
        <end position="184"/>
    </location>
</feature>
<feature type="helix" evidence="21">
    <location>
        <begin position="187"/>
        <end position="190"/>
    </location>
</feature>
<feature type="helix" evidence="21">
    <location>
        <begin position="198"/>
        <end position="213"/>
    </location>
</feature>
<feature type="helix" evidence="21">
    <location>
        <begin position="223"/>
        <end position="232"/>
    </location>
</feature>
<feature type="turn" evidence="21">
    <location>
        <begin position="239"/>
        <end position="244"/>
    </location>
</feature>
<feature type="helix" evidence="21">
    <location>
        <begin position="247"/>
        <end position="256"/>
    </location>
</feature>
<feature type="turn" evidence="21">
    <location>
        <begin position="261"/>
        <end position="263"/>
    </location>
</feature>
<feature type="helix" evidence="21">
    <location>
        <begin position="267"/>
        <end position="272"/>
    </location>
</feature>
<feature type="helix" evidence="21">
    <location>
        <begin position="274"/>
        <end position="277"/>
    </location>
</feature>
<feature type="helix" evidence="21">
    <location>
        <begin position="287"/>
        <end position="297"/>
    </location>
</feature>
<feature type="helix" evidence="22">
    <location>
        <begin position="301"/>
        <end position="311"/>
    </location>
</feature>